<name>UPE41_UPEIN</name>
<keyword id="KW-0027">Amidation</keyword>
<keyword id="KW-0878">Amphibian defense peptide</keyword>
<keyword id="KW-0044">Antibiotic</keyword>
<keyword id="KW-0929">Antimicrobial</keyword>
<keyword id="KW-0903">Direct protein sequencing</keyword>
<keyword id="KW-0964">Secreted</keyword>
<comment type="function">
    <text>Shows a medium antibacterial activity against L.mesenteriodes.</text>
</comment>
<comment type="subcellular location">
    <subcellularLocation>
        <location>Secreted</location>
    </subcellularLocation>
</comment>
<comment type="tissue specificity">
    <text>Expressed by the skin dorsal glands.</text>
</comment>
<comment type="mass spectrometry" mass="1724.0" method="FAB" evidence="1"/>
<organism>
    <name type="scientific">Uperoleia inundata</name>
    <name type="common">Floodplain toadlet</name>
    <dbReference type="NCBI Taxonomy" id="104953"/>
    <lineage>
        <taxon>Eukaryota</taxon>
        <taxon>Metazoa</taxon>
        <taxon>Chordata</taxon>
        <taxon>Craniata</taxon>
        <taxon>Vertebrata</taxon>
        <taxon>Euteleostomi</taxon>
        <taxon>Amphibia</taxon>
        <taxon>Batrachia</taxon>
        <taxon>Anura</taxon>
        <taxon>Neobatrachia</taxon>
        <taxon>Myobatrachoidea</taxon>
        <taxon>Myobatrachidae</taxon>
        <taxon>Myobatrachinae</taxon>
        <taxon>Uperoleia</taxon>
    </lineage>
</organism>
<proteinExistence type="evidence at protein level"/>
<sequence length="17" mass="1726">GVGSFIHKVVSAIKNVA</sequence>
<feature type="peptide" id="PRO_0000043861" description="Uperin-4.1">
    <location>
        <begin position="1"/>
        <end position="17"/>
    </location>
</feature>
<feature type="modified residue" description="Alanine amide" evidence="1">
    <location>
        <position position="17"/>
    </location>
</feature>
<accession>P82035</accession>
<reference key="1">
    <citation type="journal article" date="1996" name="Aust. J. Chem.">
        <title>Novel uperin peptides from the dorsal glands of the australian floodplain toadlet Uperoleia inundata.</title>
        <authorList>
            <person name="Bradford A.M."/>
            <person name="Raftery M.J."/>
            <person name="Bowie J.H."/>
            <person name="Tyler M.J."/>
            <person name="Wallace J.C."/>
            <person name="Adams G.W."/>
            <person name="Severini C."/>
        </authorList>
    </citation>
    <scope>PROTEIN SEQUENCE</scope>
    <scope>AMIDATION AT ALA-17</scope>
    <scope>MASS SPECTROMETRY</scope>
    <source>
        <tissue>Skin secretion</tissue>
    </source>
</reference>
<dbReference type="GO" id="GO:0005576">
    <property type="term" value="C:extracellular region"/>
    <property type="evidence" value="ECO:0007669"/>
    <property type="project" value="UniProtKB-SubCell"/>
</dbReference>
<dbReference type="GO" id="GO:0042742">
    <property type="term" value="P:defense response to bacterium"/>
    <property type="evidence" value="ECO:0007669"/>
    <property type="project" value="UniProtKB-KW"/>
</dbReference>
<dbReference type="InterPro" id="IPR012527">
    <property type="entry name" value="Antimicrobial_8"/>
</dbReference>
<dbReference type="Pfam" id="PF08103">
    <property type="entry name" value="Antimicrobial_8"/>
    <property type="match status" value="1"/>
</dbReference>
<protein>
    <recommendedName>
        <fullName>Uperin-4.1</fullName>
    </recommendedName>
</protein>
<evidence type="ECO:0000269" key="1">
    <source ref="1"/>
</evidence>